<feature type="chain" id="PRO_0000051486" description="Uncharacterized WD repeat-containing protein C1A6.02">
    <location>
        <begin position="1"/>
        <end position="361"/>
    </location>
</feature>
<feature type="repeat" description="WD 1">
    <location>
        <begin position="57"/>
        <end position="96"/>
    </location>
</feature>
<feature type="repeat" description="WD 2">
    <location>
        <begin position="103"/>
        <end position="142"/>
    </location>
</feature>
<feature type="repeat" description="WD 3">
    <location>
        <begin position="146"/>
        <end position="184"/>
    </location>
</feature>
<feature type="repeat" description="WD 4">
    <location>
        <begin position="187"/>
        <end position="229"/>
    </location>
</feature>
<feature type="repeat" description="WD 5">
    <location>
        <begin position="237"/>
        <end position="275"/>
    </location>
</feature>
<feature type="repeat" description="WD 6">
    <location>
        <begin position="280"/>
        <end position="318"/>
    </location>
</feature>
<feature type="region of interest" description="Disordered" evidence="1">
    <location>
        <begin position="311"/>
        <end position="361"/>
    </location>
</feature>
<gene>
    <name type="ORF">SPAC1A6.02</name>
    <name type="ORF">SPAC23C4.21</name>
</gene>
<dbReference type="EMBL" id="CU329670">
    <property type="protein sequence ID" value="CAB16892.2"/>
    <property type="molecule type" value="Genomic_DNA"/>
</dbReference>
<dbReference type="PIR" id="T38005">
    <property type="entry name" value="T38005"/>
</dbReference>
<dbReference type="RefSeq" id="XP_001713048.1">
    <property type="nucleotide sequence ID" value="XM_001712996.2"/>
</dbReference>
<dbReference type="SMR" id="O13856"/>
<dbReference type="BioGRID" id="280560">
    <property type="interactions" value="2"/>
</dbReference>
<dbReference type="FunCoup" id="O13856">
    <property type="interactions" value="549"/>
</dbReference>
<dbReference type="STRING" id="284812.O13856"/>
<dbReference type="iPTMnet" id="O13856"/>
<dbReference type="SwissPalm" id="O13856"/>
<dbReference type="PaxDb" id="4896-SPAC1A6.02.1"/>
<dbReference type="EnsemblFungi" id="SPAC1A6.02.1">
    <property type="protein sequence ID" value="SPAC1A6.02.1:pep"/>
    <property type="gene ID" value="SPAC1A6.02"/>
</dbReference>
<dbReference type="PomBase" id="SPAC1A6.02"/>
<dbReference type="VEuPathDB" id="FungiDB:SPAC1A6.02"/>
<dbReference type="eggNOG" id="KOG2444">
    <property type="taxonomic scope" value="Eukaryota"/>
</dbReference>
<dbReference type="HOGENOM" id="CLU_035848_0_0_1"/>
<dbReference type="InParanoid" id="O13856"/>
<dbReference type="OMA" id="QAIHPTE"/>
<dbReference type="PhylomeDB" id="O13856"/>
<dbReference type="Reactome" id="R-SPO-159227">
    <property type="pathway name" value="Transport of the SLBP independent Mature mRNA"/>
</dbReference>
<dbReference type="Reactome" id="R-SPO-159231">
    <property type="pathway name" value="Transport of Mature mRNA Derived from an Intronless Transcript"/>
</dbReference>
<dbReference type="Reactome" id="R-SPO-159236">
    <property type="pathway name" value="Transport of Mature mRNA derived from an Intron-Containing Transcript"/>
</dbReference>
<dbReference type="Reactome" id="R-SPO-3371453">
    <property type="pathway name" value="Regulation of HSF1-mediated heat shock response"/>
</dbReference>
<dbReference type="Reactome" id="R-SPO-4085377">
    <property type="pathway name" value="SUMOylation of SUMOylation proteins"/>
</dbReference>
<dbReference type="Reactome" id="R-SPO-4551638">
    <property type="pathway name" value="SUMOylation of chromatin organization proteins"/>
</dbReference>
<dbReference type="Reactome" id="R-SPO-4570464">
    <property type="pathway name" value="SUMOylation of RNA binding proteins"/>
</dbReference>
<dbReference type="Reactome" id="R-SPO-5578749">
    <property type="pathway name" value="Transcriptional regulation by small RNAs"/>
</dbReference>
<dbReference type="Reactome" id="R-SPO-9615933">
    <property type="pathway name" value="Postmitotic nuclear pore complex (NPC) reformation"/>
</dbReference>
<dbReference type="PRO" id="PR:O13856"/>
<dbReference type="Proteomes" id="UP000002485">
    <property type="component" value="Chromosome I"/>
</dbReference>
<dbReference type="GO" id="GO:0031080">
    <property type="term" value="C:nuclear pore outer ring"/>
    <property type="evidence" value="ECO:0000318"/>
    <property type="project" value="GO_Central"/>
</dbReference>
<dbReference type="GO" id="GO:0005730">
    <property type="term" value="C:nucleolus"/>
    <property type="evidence" value="ECO:0007005"/>
    <property type="project" value="PomBase"/>
</dbReference>
<dbReference type="GO" id="GO:0042274">
    <property type="term" value="P:ribosomal small subunit biogenesis"/>
    <property type="evidence" value="ECO:0000266"/>
    <property type="project" value="PomBase"/>
</dbReference>
<dbReference type="Gene3D" id="2.130.10.10">
    <property type="entry name" value="YVTN repeat-like/Quinoprotein amine dehydrogenase"/>
    <property type="match status" value="2"/>
</dbReference>
<dbReference type="InterPro" id="IPR015943">
    <property type="entry name" value="WD40/YVTN_repeat-like_dom_sf"/>
</dbReference>
<dbReference type="InterPro" id="IPR036322">
    <property type="entry name" value="WD40_repeat_dom_sf"/>
</dbReference>
<dbReference type="InterPro" id="IPR001680">
    <property type="entry name" value="WD40_rpt"/>
</dbReference>
<dbReference type="InterPro" id="IPR017422">
    <property type="entry name" value="WDR55"/>
</dbReference>
<dbReference type="PANTHER" id="PTHR22652">
    <property type="entry name" value="NUCLEOPORIN NUP43"/>
    <property type="match status" value="1"/>
</dbReference>
<dbReference type="PANTHER" id="PTHR22652:SF0">
    <property type="entry name" value="NUCLEOPORIN NUP43"/>
    <property type="match status" value="1"/>
</dbReference>
<dbReference type="Pfam" id="PF24796">
    <property type="entry name" value="WDR55"/>
    <property type="match status" value="1"/>
</dbReference>
<dbReference type="PIRSF" id="PIRSF038169">
    <property type="entry name" value="WD_repeat_p55"/>
    <property type="match status" value="1"/>
</dbReference>
<dbReference type="SMART" id="SM00320">
    <property type="entry name" value="WD40"/>
    <property type="match status" value="5"/>
</dbReference>
<dbReference type="SUPFAM" id="SSF50978">
    <property type="entry name" value="WD40 repeat-like"/>
    <property type="match status" value="1"/>
</dbReference>
<dbReference type="PROSITE" id="PS50294">
    <property type="entry name" value="WD_REPEATS_REGION"/>
    <property type="match status" value="1"/>
</dbReference>
<organism>
    <name type="scientific">Schizosaccharomyces pombe (strain 972 / ATCC 24843)</name>
    <name type="common">Fission yeast</name>
    <dbReference type="NCBI Taxonomy" id="284812"/>
    <lineage>
        <taxon>Eukaryota</taxon>
        <taxon>Fungi</taxon>
        <taxon>Dikarya</taxon>
        <taxon>Ascomycota</taxon>
        <taxon>Taphrinomycotina</taxon>
        <taxon>Schizosaccharomycetes</taxon>
        <taxon>Schizosaccharomycetales</taxon>
        <taxon>Schizosaccharomycetaceae</taxon>
        <taxon>Schizosaccharomyces</taxon>
    </lineage>
</organism>
<proteinExistence type="predicted"/>
<reference key="1">
    <citation type="journal article" date="2002" name="Nature">
        <title>The genome sequence of Schizosaccharomyces pombe.</title>
        <authorList>
            <person name="Wood V."/>
            <person name="Gwilliam R."/>
            <person name="Rajandream M.A."/>
            <person name="Lyne M.H."/>
            <person name="Lyne R."/>
            <person name="Stewart A."/>
            <person name="Sgouros J.G."/>
            <person name="Peat N."/>
            <person name="Hayles J."/>
            <person name="Baker S.G."/>
            <person name="Basham D."/>
            <person name="Bowman S."/>
            <person name="Brooks K."/>
            <person name="Brown D."/>
            <person name="Brown S."/>
            <person name="Chillingworth T."/>
            <person name="Churcher C.M."/>
            <person name="Collins M."/>
            <person name="Connor R."/>
            <person name="Cronin A."/>
            <person name="Davis P."/>
            <person name="Feltwell T."/>
            <person name="Fraser A."/>
            <person name="Gentles S."/>
            <person name="Goble A."/>
            <person name="Hamlin N."/>
            <person name="Harris D.E."/>
            <person name="Hidalgo J."/>
            <person name="Hodgson G."/>
            <person name="Holroyd S."/>
            <person name="Hornsby T."/>
            <person name="Howarth S."/>
            <person name="Huckle E.J."/>
            <person name="Hunt S."/>
            <person name="Jagels K."/>
            <person name="James K.D."/>
            <person name="Jones L."/>
            <person name="Jones M."/>
            <person name="Leather S."/>
            <person name="McDonald S."/>
            <person name="McLean J."/>
            <person name="Mooney P."/>
            <person name="Moule S."/>
            <person name="Mungall K.L."/>
            <person name="Murphy L.D."/>
            <person name="Niblett D."/>
            <person name="Odell C."/>
            <person name="Oliver K."/>
            <person name="O'Neil S."/>
            <person name="Pearson D."/>
            <person name="Quail M.A."/>
            <person name="Rabbinowitsch E."/>
            <person name="Rutherford K.M."/>
            <person name="Rutter S."/>
            <person name="Saunders D."/>
            <person name="Seeger K."/>
            <person name="Sharp S."/>
            <person name="Skelton J."/>
            <person name="Simmonds M.N."/>
            <person name="Squares R."/>
            <person name="Squares S."/>
            <person name="Stevens K."/>
            <person name="Taylor K."/>
            <person name="Taylor R.G."/>
            <person name="Tivey A."/>
            <person name="Walsh S.V."/>
            <person name="Warren T."/>
            <person name="Whitehead S."/>
            <person name="Woodward J.R."/>
            <person name="Volckaert G."/>
            <person name="Aert R."/>
            <person name="Robben J."/>
            <person name="Grymonprez B."/>
            <person name="Weltjens I."/>
            <person name="Vanstreels E."/>
            <person name="Rieger M."/>
            <person name="Schaefer M."/>
            <person name="Mueller-Auer S."/>
            <person name="Gabel C."/>
            <person name="Fuchs M."/>
            <person name="Duesterhoeft A."/>
            <person name="Fritzc C."/>
            <person name="Holzer E."/>
            <person name="Moestl D."/>
            <person name="Hilbert H."/>
            <person name="Borzym K."/>
            <person name="Langer I."/>
            <person name="Beck A."/>
            <person name="Lehrach H."/>
            <person name="Reinhardt R."/>
            <person name="Pohl T.M."/>
            <person name="Eger P."/>
            <person name="Zimmermann W."/>
            <person name="Wedler H."/>
            <person name="Wambutt R."/>
            <person name="Purnelle B."/>
            <person name="Goffeau A."/>
            <person name="Cadieu E."/>
            <person name="Dreano S."/>
            <person name="Gloux S."/>
            <person name="Lelaure V."/>
            <person name="Mottier S."/>
            <person name="Galibert F."/>
            <person name="Aves S.J."/>
            <person name="Xiang Z."/>
            <person name="Hunt C."/>
            <person name="Moore K."/>
            <person name="Hurst S.M."/>
            <person name="Lucas M."/>
            <person name="Rochet M."/>
            <person name="Gaillardin C."/>
            <person name="Tallada V.A."/>
            <person name="Garzon A."/>
            <person name="Thode G."/>
            <person name="Daga R.R."/>
            <person name="Cruzado L."/>
            <person name="Jimenez J."/>
            <person name="Sanchez M."/>
            <person name="del Rey F."/>
            <person name="Benito J."/>
            <person name="Dominguez A."/>
            <person name="Revuelta J.L."/>
            <person name="Moreno S."/>
            <person name="Armstrong J."/>
            <person name="Forsburg S.L."/>
            <person name="Cerutti L."/>
            <person name="Lowe T."/>
            <person name="McCombie W.R."/>
            <person name="Paulsen I."/>
            <person name="Potashkin J."/>
            <person name="Shpakovski G.V."/>
            <person name="Ussery D."/>
            <person name="Barrell B.G."/>
            <person name="Nurse P."/>
        </authorList>
    </citation>
    <scope>NUCLEOTIDE SEQUENCE [LARGE SCALE GENOMIC DNA]</scope>
    <source>
        <strain>972 / ATCC 24843</strain>
    </source>
</reference>
<reference key="2">
    <citation type="journal article" date="2006" name="Nat. Biotechnol.">
        <title>ORFeome cloning and global analysis of protein localization in the fission yeast Schizosaccharomyces pombe.</title>
        <authorList>
            <person name="Matsuyama A."/>
            <person name="Arai R."/>
            <person name="Yashiroda Y."/>
            <person name="Shirai A."/>
            <person name="Kamata A."/>
            <person name="Sekido S."/>
            <person name="Kobayashi Y."/>
            <person name="Hashimoto A."/>
            <person name="Hamamoto M."/>
            <person name="Hiraoka Y."/>
            <person name="Horinouchi S."/>
            <person name="Yoshida M."/>
        </authorList>
    </citation>
    <scope>SUBCELLULAR LOCATION [LARGE SCALE ANALYSIS]</scope>
</reference>
<comment type="subcellular location">
    <subcellularLocation>
        <location evidence="2">Nucleus</location>
        <location evidence="2">Nucleolus</location>
    </subcellularLocation>
</comment>
<protein>
    <recommendedName>
        <fullName>Uncharacterized WD repeat-containing protein C1A6.02</fullName>
    </recommendedName>
</protein>
<accession>O13856</accession>
<accession>Q1K9B5</accession>
<sequence>MGGTINAAIKQKFENEIFDLACFGENQVLLGFSNGRVSSYQYDVAQISLVEQWSTKRHKKSCRNISVNESGTEFISVGSDGVLKIADTSTGRVSSKWIVDKNKEISPYSVVQWIENDMVFATGDDNGCVSVWDKRTEGGIIHTHNDHIDYISSISPFEERYFVATSGDGVLSVIDARNFKKPILSEEQDEEMTCGAFTRDQHSKKKFAVGTASGVITLFTKGDWGDHTDRILSPIRSHDFSIETITRADSDSLYVGGSDGCIRLLHILPNKYERIIGQHSSRSTVDAVDVTTEGNFLVSCSGTELAFWPVDQKEGDESSSSDNLDSDEDSSSDSEFSSPKKKKKVGNQGKKPLGTDFFDGL</sequence>
<evidence type="ECO:0000256" key="1">
    <source>
        <dbReference type="SAM" id="MobiDB-lite"/>
    </source>
</evidence>
<evidence type="ECO:0000269" key="2">
    <source>
    </source>
</evidence>
<keyword id="KW-0539">Nucleus</keyword>
<keyword id="KW-1185">Reference proteome</keyword>
<keyword id="KW-0677">Repeat</keyword>
<keyword id="KW-0853">WD repeat</keyword>
<name>YEX2_SCHPO</name>